<sequence>MHRSYAVLLRNNVARLCYRPGSTLFIRNFTTRHSLRQSKPWYLDISENKEEDSNSPFIKPIRFPPTEIPASLETISKYLNDKLAVTDIVVFDTAHSSSATSIQSMASYVLIGTVKSFRHLQNCNDELIKFIKETFDEVPKSEGLVTSGILRKRQRRLGRKTNLGKIAKIENDESGWCLIDSNVDGLFINIMTEERRDDLNLEELYCRVEELDQYKKQINLNPPAEEEDDVLLGLRKLMMKNTKRYYSTVGESPKPTFLEALTIQDLDSASKLIKEEKKPYHVIASALGRLPNHIELDAENWIKLFNEATPTEGPLDYEYWGARFKFFQLLYISKRNNIEENTQLDASTIKEFNRELNYFINDFFRFKQLALCQPTREELIGFLEICIQHLKLSKSYNQLISVNMWILKALQSYQYSDPKVVHDPRVIKLLVKSMHTENTNLNSLYEYVNLITNEFEVRSLTNDVIKEIITTLVESENWPTLFKFWKQCLCESAVDSNVWDFFIKSLLNKNDKVILSDIVDNGHLLWIHRSKLVISDDLKASLSKLLDRVDGSHTNIKKLLKL</sequence>
<comment type="function">
    <text evidence="1">Probable mitochondrial mRNA stabilization factor.</text>
</comment>
<comment type="subcellular location">
    <subcellularLocation>
        <location evidence="1">Mitochondrion inner membrane</location>
        <topology evidence="1">Peripheral membrane protein</topology>
        <orientation evidence="1">Matrix side</orientation>
    </subcellularLocation>
</comment>
<comment type="similarity">
    <text evidence="3">Belongs to the ATP25 family.</text>
</comment>
<organism>
    <name type="scientific">Kluyveromyces lactis (strain ATCC 8585 / CBS 2359 / DSM 70799 / NBRC 1267 / NRRL Y-1140 / WM37)</name>
    <name type="common">Yeast</name>
    <name type="synonym">Candida sphaerica</name>
    <dbReference type="NCBI Taxonomy" id="284590"/>
    <lineage>
        <taxon>Eukaryota</taxon>
        <taxon>Fungi</taxon>
        <taxon>Dikarya</taxon>
        <taxon>Ascomycota</taxon>
        <taxon>Saccharomycotina</taxon>
        <taxon>Saccharomycetes</taxon>
        <taxon>Saccharomycetales</taxon>
        <taxon>Saccharomycetaceae</taxon>
        <taxon>Kluyveromyces</taxon>
    </lineage>
</organism>
<keyword id="KW-0472">Membrane</keyword>
<keyword id="KW-0496">Mitochondrion</keyword>
<keyword id="KW-0999">Mitochondrion inner membrane</keyword>
<keyword id="KW-1185">Reference proteome</keyword>
<keyword id="KW-0809">Transit peptide</keyword>
<feature type="transit peptide" description="Mitochondrion" evidence="2">
    <location>
        <begin position="1"/>
        <end position="36"/>
    </location>
</feature>
<feature type="chain" id="PRO_0000404472" description="ATPase synthesis protein 25, mitochondrial">
    <location>
        <begin position="37"/>
        <end position="562"/>
    </location>
</feature>
<accession>Q6CLH6</accession>
<gene>
    <name type="primary">ATP25</name>
    <name type="ordered locus">KLLA0F02948g</name>
</gene>
<dbReference type="EMBL" id="CR382126">
    <property type="protein sequence ID" value="CAG97921.1"/>
    <property type="molecule type" value="Genomic_DNA"/>
</dbReference>
<dbReference type="RefSeq" id="XP_455213.1">
    <property type="nucleotide sequence ID" value="XM_455213.1"/>
</dbReference>
<dbReference type="SMR" id="Q6CLH6"/>
<dbReference type="FunCoup" id="Q6CLH6">
    <property type="interactions" value="96"/>
</dbReference>
<dbReference type="STRING" id="284590.Q6CLH6"/>
<dbReference type="PaxDb" id="284590-Q6CLH6"/>
<dbReference type="KEGG" id="kla:KLLA0_F02948g"/>
<dbReference type="eggNOG" id="ENOG502RGZN">
    <property type="taxonomic scope" value="Eukaryota"/>
</dbReference>
<dbReference type="HOGENOM" id="CLU_557841_0_0_1"/>
<dbReference type="InParanoid" id="Q6CLH6"/>
<dbReference type="OMA" id="SWYMIDC"/>
<dbReference type="Proteomes" id="UP000000598">
    <property type="component" value="Chromosome F"/>
</dbReference>
<dbReference type="GO" id="GO:0005743">
    <property type="term" value="C:mitochondrial inner membrane"/>
    <property type="evidence" value="ECO:0007669"/>
    <property type="project" value="UniProtKB-SubCell"/>
</dbReference>
<dbReference type="GO" id="GO:0140053">
    <property type="term" value="P:mitochondrial gene expression"/>
    <property type="evidence" value="ECO:0007669"/>
    <property type="project" value="InterPro"/>
</dbReference>
<dbReference type="GO" id="GO:0048255">
    <property type="term" value="P:mRNA stabilization"/>
    <property type="evidence" value="ECO:0007669"/>
    <property type="project" value="InterPro"/>
</dbReference>
<dbReference type="Gene3D" id="3.30.460.10">
    <property type="entry name" value="Beta Polymerase, domain 2"/>
    <property type="match status" value="1"/>
</dbReference>
<dbReference type="InterPro" id="IPR040152">
    <property type="entry name" value="Atp25"/>
</dbReference>
<dbReference type="InterPro" id="IPR025210">
    <property type="entry name" value="ATP25_mRNA_stabil_dom"/>
</dbReference>
<dbReference type="InterPro" id="IPR043519">
    <property type="entry name" value="NT_sf"/>
</dbReference>
<dbReference type="PANTHER" id="PTHR28087">
    <property type="entry name" value="ATPASE SYNTHESIS PROTEIN 25, MITOCHONDRIAL"/>
    <property type="match status" value="1"/>
</dbReference>
<dbReference type="PANTHER" id="PTHR28087:SF1">
    <property type="entry name" value="ATPASE SYNTHESIS PROTEIN 25, MITOCHONDRIAL"/>
    <property type="match status" value="1"/>
</dbReference>
<dbReference type="Pfam" id="PF13929">
    <property type="entry name" value="mRNA_stabil"/>
    <property type="match status" value="1"/>
</dbReference>
<dbReference type="Pfam" id="PF02410">
    <property type="entry name" value="RsfS"/>
    <property type="match status" value="1"/>
</dbReference>
<dbReference type="SUPFAM" id="SSF81301">
    <property type="entry name" value="Nucleotidyltransferase"/>
    <property type="match status" value="1"/>
</dbReference>
<reference key="1">
    <citation type="journal article" date="2004" name="Nature">
        <title>Genome evolution in yeasts.</title>
        <authorList>
            <person name="Dujon B."/>
            <person name="Sherman D."/>
            <person name="Fischer G."/>
            <person name="Durrens P."/>
            <person name="Casaregola S."/>
            <person name="Lafontaine I."/>
            <person name="de Montigny J."/>
            <person name="Marck C."/>
            <person name="Neuveglise C."/>
            <person name="Talla E."/>
            <person name="Goffard N."/>
            <person name="Frangeul L."/>
            <person name="Aigle M."/>
            <person name="Anthouard V."/>
            <person name="Babour A."/>
            <person name="Barbe V."/>
            <person name="Barnay S."/>
            <person name="Blanchin S."/>
            <person name="Beckerich J.-M."/>
            <person name="Beyne E."/>
            <person name="Bleykasten C."/>
            <person name="Boisrame A."/>
            <person name="Boyer J."/>
            <person name="Cattolico L."/>
            <person name="Confanioleri F."/>
            <person name="de Daruvar A."/>
            <person name="Despons L."/>
            <person name="Fabre E."/>
            <person name="Fairhead C."/>
            <person name="Ferry-Dumazet H."/>
            <person name="Groppi A."/>
            <person name="Hantraye F."/>
            <person name="Hennequin C."/>
            <person name="Jauniaux N."/>
            <person name="Joyet P."/>
            <person name="Kachouri R."/>
            <person name="Kerrest A."/>
            <person name="Koszul R."/>
            <person name="Lemaire M."/>
            <person name="Lesur I."/>
            <person name="Ma L."/>
            <person name="Muller H."/>
            <person name="Nicaud J.-M."/>
            <person name="Nikolski M."/>
            <person name="Oztas S."/>
            <person name="Ozier-Kalogeropoulos O."/>
            <person name="Pellenz S."/>
            <person name="Potier S."/>
            <person name="Richard G.-F."/>
            <person name="Straub M.-L."/>
            <person name="Suleau A."/>
            <person name="Swennen D."/>
            <person name="Tekaia F."/>
            <person name="Wesolowski-Louvel M."/>
            <person name="Westhof E."/>
            <person name="Wirth B."/>
            <person name="Zeniou-Meyer M."/>
            <person name="Zivanovic Y."/>
            <person name="Bolotin-Fukuhara M."/>
            <person name="Thierry A."/>
            <person name="Bouchier C."/>
            <person name="Caudron B."/>
            <person name="Scarpelli C."/>
            <person name="Gaillardin C."/>
            <person name="Weissenbach J."/>
            <person name="Wincker P."/>
            <person name="Souciet J.-L."/>
        </authorList>
    </citation>
    <scope>NUCLEOTIDE SEQUENCE [LARGE SCALE GENOMIC DNA]</scope>
    <source>
        <strain>ATCC 8585 / CBS 2359 / DSM 70799 / NBRC 1267 / NRRL Y-1140 / WM37</strain>
    </source>
</reference>
<protein>
    <recommendedName>
        <fullName>ATPase synthesis protein 25, mitochondrial</fullName>
    </recommendedName>
</protein>
<name>ATP25_KLULA</name>
<evidence type="ECO:0000250" key="1"/>
<evidence type="ECO:0000255" key="2"/>
<evidence type="ECO:0000305" key="3"/>
<proteinExistence type="inferred from homology"/>